<proteinExistence type="inferred from homology"/>
<gene>
    <name evidence="1" type="primary">glnE</name>
    <name type="ordered locus">BQ2027_MB2245C</name>
</gene>
<name>GLNE_MYCBO</name>
<accession>P69941</accession>
<accession>A0A1R3Y0J7</accession>
<accession>Q10379</accession>
<accession>X2BK61</accession>
<protein>
    <recommendedName>
        <fullName evidence="1">Bifunctional glutamine synthetase adenylyltransferase/adenylyl-removing enzyme</fullName>
    </recommendedName>
    <alternativeName>
        <fullName evidence="1">ATP:glutamine synthetase adenylyltransferase</fullName>
    </alternativeName>
    <alternativeName>
        <fullName evidence="1">ATase</fullName>
    </alternativeName>
    <domain>
        <recommendedName>
            <fullName evidence="1">Glutamine synthetase adenylyl-L-tyrosine phosphorylase</fullName>
            <ecNumber evidence="1">2.7.7.89</ecNumber>
        </recommendedName>
        <alternativeName>
            <fullName evidence="1">Adenylyl removase</fullName>
            <shortName evidence="1">AR</shortName>
            <shortName evidence="1">AT-N</shortName>
        </alternativeName>
    </domain>
    <domain>
        <recommendedName>
            <fullName evidence="1">Glutamine synthetase adenylyl transferase</fullName>
            <ecNumber evidence="1">2.7.7.42</ecNumber>
        </recommendedName>
        <alternativeName>
            <fullName evidence="1">Adenylyl transferase</fullName>
            <shortName evidence="1">AT</shortName>
            <shortName evidence="1">AT-C</shortName>
        </alternativeName>
    </domain>
</protein>
<reference key="1">
    <citation type="journal article" date="2003" name="Proc. Natl. Acad. Sci. U.S.A.">
        <title>The complete genome sequence of Mycobacterium bovis.</title>
        <authorList>
            <person name="Garnier T."/>
            <person name="Eiglmeier K."/>
            <person name="Camus J.-C."/>
            <person name="Medina N."/>
            <person name="Mansoor H."/>
            <person name="Pryor M."/>
            <person name="Duthoy S."/>
            <person name="Grondin S."/>
            <person name="Lacroix C."/>
            <person name="Monsempe C."/>
            <person name="Simon S."/>
            <person name="Harris B."/>
            <person name="Atkin R."/>
            <person name="Doggett J."/>
            <person name="Mayes R."/>
            <person name="Keating L."/>
            <person name="Wheeler P.R."/>
            <person name="Parkhill J."/>
            <person name="Barrell B.G."/>
            <person name="Cole S.T."/>
            <person name="Gordon S.V."/>
            <person name="Hewinson R.G."/>
        </authorList>
    </citation>
    <scope>NUCLEOTIDE SEQUENCE [LARGE SCALE GENOMIC DNA]</scope>
    <source>
        <strain>ATCC BAA-935 / AF2122/97</strain>
    </source>
</reference>
<reference key="2">
    <citation type="journal article" date="2017" name="Genome Announc.">
        <title>Updated reference genome sequence and annotation of Mycobacterium bovis AF2122/97.</title>
        <authorList>
            <person name="Malone K.M."/>
            <person name="Farrell D."/>
            <person name="Stuber T.P."/>
            <person name="Schubert O.T."/>
            <person name="Aebersold R."/>
            <person name="Robbe-Austerman S."/>
            <person name="Gordon S.V."/>
        </authorList>
    </citation>
    <scope>NUCLEOTIDE SEQUENCE [LARGE SCALE GENOMIC DNA]</scope>
    <scope>GENOME REANNOTATION</scope>
    <source>
        <strain>ATCC BAA-935 / AF2122/97</strain>
    </source>
</reference>
<evidence type="ECO:0000255" key="1">
    <source>
        <dbReference type="HAMAP-Rule" id="MF_00802"/>
    </source>
</evidence>
<dbReference type="EC" id="2.7.7.89" evidence="1"/>
<dbReference type="EC" id="2.7.7.42" evidence="1"/>
<dbReference type="EMBL" id="LT708304">
    <property type="protein sequence ID" value="SIU00853.1"/>
    <property type="molecule type" value="Genomic_DNA"/>
</dbReference>
<dbReference type="RefSeq" id="NP_855894.1">
    <property type="nucleotide sequence ID" value="NC_002945.3"/>
</dbReference>
<dbReference type="RefSeq" id="WP_003411478.1">
    <property type="nucleotide sequence ID" value="NC_002945.4"/>
</dbReference>
<dbReference type="SMR" id="P69941"/>
<dbReference type="KEGG" id="mbo:BQ2027_MB2245C"/>
<dbReference type="PATRIC" id="fig|233413.5.peg.2462"/>
<dbReference type="Proteomes" id="UP000001419">
    <property type="component" value="Chromosome"/>
</dbReference>
<dbReference type="GO" id="GO:0005829">
    <property type="term" value="C:cytosol"/>
    <property type="evidence" value="ECO:0007669"/>
    <property type="project" value="TreeGrafter"/>
</dbReference>
<dbReference type="GO" id="GO:0008882">
    <property type="term" value="F:[glutamate-ammonia-ligase] adenylyltransferase activity"/>
    <property type="evidence" value="ECO:0007669"/>
    <property type="project" value="UniProtKB-UniRule"/>
</dbReference>
<dbReference type="GO" id="GO:0047388">
    <property type="term" value="F:[glutamine synthetase]-adenylyl-L-tyrosine phosphorylase activity"/>
    <property type="evidence" value="ECO:0007669"/>
    <property type="project" value="UniProtKB-EC"/>
</dbReference>
<dbReference type="GO" id="GO:0005524">
    <property type="term" value="F:ATP binding"/>
    <property type="evidence" value="ECO:0007669"/>
    <property type="project" value="UniProtKB-UniRule"/>
</dbReference>
<dbReference type="GO" id="GO:0000287">
    <property type="term" value="F:magnesium ion binding"/>
    <property type="evidence" value="ECO:0007669"/>
    <property type="project" value="UniProtKB-UniRule"/>
</dbReference>
<dbReference type="GO" id="GO:0000820">
    <property type="term" value="P:regulation of glutamine family amino acid metabolic process"/>
    <property type="evidence" value="ECO:0007669"/>
    <property type="project" value="UniProtKB-UniRule"/>
</dbReference>
<dbReference type="CDD" id="cd05401">
    <property type="entry name" value="NT_GlnE_GlnD_like"/>
    <property type="match status" value="2"/>
</dbReference>
<dbReference type="FunFam" id="1.20.120.330:FF:000022">
    <property type="entry name" value="Bifunctional glutamine synthetase adenylyltransferase/adenylyl-removing enzyme"/>
    <property type="match status" value="1"/>
</dbReference>
<dbReference type="FunFam" id="1.20.120.330:FF:000023">
    <property type="entry name" value="Bifunctional glutamine synthetase adenylyltransferase/adenylyl-removing enzyme"/>
    <property type="match status" value="1"/>
</dbReference>
<dbReference type="FunFam" id="3.30.460.10:FF:000055">
    <property type="entry name" value="Bifunctional glutamine synthetase adenylyltransferase/adenylyl-removing enzyme"/>
    <property type="match status" value="1"/>
</dbReference>
<dbReference type="Gene3D" id="3.30.460.10">
    <property type="entry name" value="Beta Polymerase, domain 2"/>
    <property type="match status" value="2"/>
</dbReference>
<dbReference type="Gene3D" id="1.20.120.330">
    <property type="entry name" value="Nucleotidyltransferases domain 2"/>
    <property type="match status" value="2"/>
</dbReference>
<dbReference type="HAMAP" id="MF_00802">
    <property type="entry name" value="GlnE"/>
    <property type="match status" value="1"/>
</dbReference>
<dbReference type="InterPro" id="IPR023057">
    <property type="entry name" value="GlnE"/>
</dbReference>
<dbReference type="InterPro" id="IPR005190">
    <property type="entry name" value="GlnE_rpt_dom"/>
</dbReference>
<dbReference type="InterPro" id="IPR043519">
    <property type="entry name" value="NT_sf"/>
</dbReference>
<dbReference type="InterPro" id="IPR013546">
    <property type="entry name" value="PII_UdlTrfase/GS_AdlTrfase"/>
</dbReference>
<dbReference type="NCBIfam" id="NF010707">
    <property type="entry name" value="PRK14109.1"/>
    <property type="match status" value="1"/>
</dbReference>
<dbReference type="PANTHER" id="PTHR30621:SF0">
    <property type="entry name" value="BIFUNCTIONAL GLUTAMINE SYNTHETASE ADENYLYLTRANSFERASE_ADENYLYL-REMOVING ENZYME"/>
    <property type="match status" value="1"/>
</dbReference>
<dbReference type="PANTHER" id="PTHR30621">
    <property type="entry name" value="GLUTAMINE SYNTHETASE ADENYLYLTRANSFERASE"/>
    <property type="match status" value="1"/>
</dbReference>
<dbReference type="Pfam" id="PF08335">
    <property type="entry name" value="GlnD_UR_UTase"/>
    <property type="match status" value="2"/>
</dbReference>
<dbReference type="Pfam" id="PF03710">
    <property type="entry name" value="GlnE"/>
    <property type="match status" value="2"/>
</dbReference>
<dbReference type="SUPFAM" id="SSF81301">
    <property type="entry name" value="Nucleotidyltransferase"/>
    <property type="match status" value="2"/>
</dbReference>
<dbReference type="SUPFAM" id="SSF81593">
    <property type="entry name" value="Nucleotidyltransferase substrate binding subunit/domain"/>
    <property type="match status" value="2"/>
</dbReference>
<keyword id="KW-0067">ATP-binding</keyword>
<keyword id="KW-0460">Magnesium</keyword>
<keyword id="KW-0511">Multifunctional enzyme</keyword>
<keyword id="KW-0547">Nucleotide-binding</keyword>
<keyword id="KW-0548">Nucleotidyltransferase</keyword>
<keyword id="KW-1185">Reference proteome</keyword>
<keyword id="KW-0808">Transferase</keyword>
<comment type="function">
    <text evidence="1">Involved in the regulation of glutamine synthetase GlnA, a key enzyme in the process to assimilate ammonia. When cellular nitrogen levels are high, the C-terminal adenylyl transferase (AT) inactivates GlnA by covalent transfer of an adenylyl group from ATP to specific tyrosine residue of GlnA, thus reducing its activity. Conversely, when nitrogen levels are low, the N-terminal adenylyl removase (AR) activates GlnA by removing the adenylyl group by phosphorolysis, increasing its activity. The regulatory region of GlnE binds the signal transduction protein PII (GlnB) which indicates the nitrogen status of the cell.</text>
</comment>
<comment type="catalytic activity">
    <reaction evidence="1">
        <text>[glutamine synthetase]-O(4)-(5'-adenylyl)-L-tyrosine + phosphate = [glutamine synthetase]-L-tyrosine + ADP</text>
        <dbReference type="Rhea" id="RHEA:43716"/>
        <dbReference type="Rhea" id="RHEA-COMP:10660"/>
        <dbReference type="Rhea" id="RHEA-COMP:10661"/>
        <dbReference type="ChEBI" id="CHEBI:43474"/>
        <dbReference type="ChEBI" id="CHEBI:46858"/>
        <dbReference type="ChEBI" id="CHEBI:83624"/>
        <dbReference type="ChEBI" id="CHEBI:456216"/>
        <dbReference type="EC" id="2.7.7.89"/>
    </reaction>
</comment>
<comment type="catalytic activity">
    <reaction evidence="1">
        <text>[glutamine synthetase]-L-tyrosine + ATP = [glutamine synthetase]-O(4)-(5'-adenylyl)-L-tyrosine + diphosphate</text>
        <dbReference type="Rhea" id="RHEA:18589"/>
        <dbReference type="Rhea" id="RHEA-COMP:10660"/>
        <dbReference type="Rhea" id="RHEA-COMP:10661"/>
        <dbReference type="ChEBI" id="CHEBI:30616"/>
        <dbReference type="ChEBI" id="CHEBI:33019"/>
        <dbReference type="ChEBI" id="CHEBI:46858"/>
        <dbReference type="ChEBI" id="CHEBI:83624"/>
        <dbReference type="EC" id="2.7.7.42"/>
    </reaction>
</comment>
<comment type="cofactor">
    <cofactor evidence="1">
        <name>Mg(2+)</name>
        <dbReference type="ChEBI" id="CHEBI:18420"/>
    </cofactor>
</comment>
<comment type="similarity">
    <text evidence="1">Belongs to the GlnE family.</text>
</comment>
<organism>
    <name type="scientific">Mycobacterium bovis (strain ATCC BAA-935 / AF2122/97)</name>
    <dbReference type="NCBI Taxonomy" id="233413"/>
    <lineage>
        <taxon>Bacteria</taxon>
        <taxon>Bacillati</taxon>
        <taxon>Actinomycetota</taxon>
        <taxon>Actinomycetes</taxon>
        <taxon>Mycobacteriales</taxon>
        <taxon>Mycobacteriaceae</taxon>
        <taxon>Mycobacterium</taxon>
        <taxon>Mycobacterium tuberculosis complex</taxon>
    </lineage>
</organism>
<sequence length="994" mass="109138">MVVTKLATQRPKLPSVGRLGLVDPPAGERLAQLGWDRHEDQAHVDLLWSLSRAPDADAALRALIRLSENPDTGWDELNAALLRERSLRGRLFSVLGSSLALGDHLVAHPQSWKLLRGKVTLPSHDQLQRSFVECVEESEGMPGSLVHRLRTQYRDYVLMLAALDLAATVEDEPVLPFTVVAARLADAADAALAAALRVAEASVCGEHPPPRLAVIAMGKCGARELNYVSDVDVIFVAERSDPRNARVASEMMRVASAAFFEVDAALRPEGRNGELVRTLESHIAYYQRWAKTWEFQALLKARPVVGDAELGERYLTALMPMVWRACEREDFVVEVQAMRRRVEQLVPADVRGRELKLGSGGLRDVEFAVQLLQLVHARSDESLRVASTVDALAALGEGGYIGREDAANMTASYEFLRLLEHRLQLQRLKRTHLLPDPEDEEAVRWLARAAHIRPDGRNDAAGVLREELKKQNVRVSKLHTKLFYQPLLESIGPTGLEIAHGMTLEAAGRRLAALGYEGPQTALKHMSALVNQSGRRGRVQSVLLPRLLDWMSYAPDPDGGLLAYRRLSEALATESWYLATLRDKPAVAKRLMHVLGTSAYVPDLLMRAPRVIQQYEDGPAGPKLLETEPAAVARALIASASRYPDPERAIAGARTLRRRELARIGSADLLGLLEVTEVCRALTSVWVAVLQAALDVMIRASLPDDDRAPAAIAVIGMGRLGGAELGYGSDADVMFVCEPATGVDDARAVKWSTSIAERVRALLGTPSVDPPLELDANLRPEGRNGPLVRTLGSYAAYYEQWAQPWEIQALLRAHAVAGDAELGQRFLRMVDKTRYPPDGVSADSVREIRRIKARIESERLPRGADPNTHTKLGRGGLADIEWTVQLLQLQHAHQVPALHNTSTLQSLDVIAAADLVPAADVELLRQAWLTATRARNALVLVRGKPTDQLPGPGRQLNAVAVAAGWRNDDGGEFLDNYLRVTRRAKAVVRKVFGS</sequence>
<feature type="chain" id="PRO_0000209254" description="Bifunctional glutamine synthetase adenylyltransferase/adenylyl-removing enzyme">
    <location>
        <begin position="1"/>
        <end position="994"/>
    </location>
</feature>
<feature type="region of interest" description="Adenylyl removase" evidence="1">
    <location>
        <begin position="1"/>
        <end position="487"/>
    </location>
</feature>
<feature type="region of interest" description="Adenylyl transferase" evidence="1">
    <location>
        <begin position="492"/>
        <end position="994"/>
    </location>
</feature>